<dbReference type="EMBL" id="U00096">
    <property type="protein sequence ID" value="AAC74557.1"/>
    <property type="molecule type" value="Genomic_DNA"/>
</dbReference>
<dbReference type="EMBL" id="AP009048">
    <property type="protein sequence ID" value="BAA15139.1"/>
    <property type="molecule type" value="Genomic_DNA"/>
</dbReference>
<dbReference type="PIR" id="G64901">
    <property type="entry name" value="G64901"/>
</dbReference>
<dbReference type="RefSeq" id="NP_416001.1">
    <property type="nucleotide sequence ID" value="NC_000913.3"/>
</dbReference>
<dbReference type="RefSeq" id="WP_000193547.1">
    <property type="nucleotide sequence ID" value="NZ_SSZK01000038.1"/>
</dbReference>
<dbReference type="SMR" id="P77268"/>
<dbReference type="BioGRID" id="4260962">
    <property type="interactions" value="129"/>
</dbReference>
<dbReference type="ComplexPortal" id="CPX-4321">
    <property type="entry name" value="Dipeptide ABC transporter complex"/>
</dbReference>
<dbReference type="DIP" id="DIP-11669N"/>
<dbReference type="FunCoup" id="P77268">
    <property type="interactions" value="141"/>
</dbReference>
<dbReference type="IntAct" id="P77268">
    <property type="interactions" value="9"/>
</dbReference>
<dbReference type="STRING" id="511145.b1484"/>
<dbReference type="TCDB" id="3.A.1.5.38">
    <property type="family name" value="the atp-binding cassette (abc) superfamily"/>
</dbReference>
<dbReference type="PaxDb" id="511145-b1484"/>
<dbReference type="EnsemblBacteria" id="AAC74557">
    <property type="protein sequence ID" value="AAC74557"/>
    <property type="gene ID" value="b1484"/>
</dbReference>
<dbReference type="GeneID" id="946002"/>
<dbReference type="KEGG" id="ecj:JW1479"/>
<dbReference type="KEGG" id="eco:b1484"/>
<dbReference type="KEGG" id="ecoc:C3026_08600"/>
<dbReference type="PATRIC" id="fig|1411691.4.peg.783"/>
<dbReference type="EchoBASE" id="EB3548"/>
<dbReference type="eggNOG" id="COG0444">
    <property type="taxonomic scope" value="Bacteria"/>
</dbReference>
<dbReference type="HOGENOM" id="CLU_000604_1_23_6"/>
<dbReference type="InParanoid" id="P77268"/>
<dbReference type="OMA" id="RVNVMYL"/>
<dbReference type="OrthoDB" id="9784450at2"/>
<dbReference type="PhylomeDB" id="P77268"/>
<dbReference type="BioCyc" id="EcoCyc:YDDP-MONOMER"/>
<dbReference type="PRO" id="PR:P77268"/>
<dbReference type="Proteomes" id="UP000000625">
    <property type="component" value="Chromosome"/>
</dbReference>
<dbReference type="GO" id="GO:0055052">
    <property type="term" value="C:ATP-binding cassette (ABC) transporter complex, substrate-binding subunit-containing"/>
    <property type="evidence" value="ECO:0000303"/>
    <property type="project" value="ComplexPortal"/>
</dbReference>
<dbReference type="GO" id="GO:0016020">
    <property type="term" value="C:membrane"/>
    <property type="evidence" value="ECO:0000303"/>
    <property type="project" value="ComplexPortal"/>
</dbReference>
<dbReference type="GO" id="GO:0005524">
    <property type="term" value="F:ATP binding"/>
    <property type="evidence" value="ECO:0007669"/>
    <property type="project" value="UniProtKB-KW"/>
</dbReference>
<dbReference type="GO" id="GO:0016887">
    <property type="term" value="F:ATP hydrolysis activity"/>
    <property type="evidence" value="ECO:0007669"/>
    <property type="project" value="InterPro"/>
</dbReference>
<dbReference type="GO" id="GO:0042938">
    <property type="term" value="P:dipeptide transport"/>
    <property type="evidence" value="ECO:0000303"/>
    <property type="project" value="ComplexPortal"/>
</dbReference>
<dbReference type="GO" id="GO:0015031">
    <property type="term" value="P:protein transport"/>
    <property type="evidence" value="ECO:0007669"/>
    <property type="project" value="UniProtKB-KW"/>
</dbReference>
<dbReference type="CDD" id="cd03257">
    <property type="entry name" value="ABC_NikE_OppD_transporters"/>
    <property type="match status" value="1"/>
</dbReference>
<dbReference type="FunFam" id="3.40.50.300:FF:000016">
    <property type="entry name" value="Oligopeptide ABC transporter ATP-binding component"/>
    <property type="match status" value="1"/>
</dbReference>
<dbReference type="Gene3D" id="3.40.50.300">
    <property type="entry name" value="P-loop containing nucleotide triphosphate hydrolases"/>
    <property type="match status" value="1"/>
</dbReference>
<dbReference type="InterPro" id="IPR003593">
    <property type="entry name" value="AAA+_ATPase"/>
</dbReference>
<dbReference type="InterPro" id="IPR050388">
    <property type="entry name" value="ABC_Ni/Peptide_Import"/>
</dbReference>
<dbReference type="InterPro" id="IPR003439">
    <property type="entry name" value="ABC_transporter-like_ATP-bd"/>
</dbReference>
<dbReference type="InterPro" id="IPR017871">
    <property type="entry name" value="ABC_transporter-like_CS"/>
</dbReference>
<dbReference type="InterPro" id="IPR013563">
    <property type="entry name" value="Oligopep_ABC_C"/>
</dbReference>
<dbReference type="InterPro" id="IPR027417">
    <property type="entry name" value="P-loop_NTPase"/>
</dbReference>
<dbReference type="NCBIfam" id="TIGR01727">
    <property type="entry name" value="oligo_HPY"/>
    <property type="match status" value="1"/>
</dbReference>
<dbReference type="PANTHER" id="PTHR43297:SF7">
    <property type="entry name" value="D,D-DIPEPTIDE TRANSPORT ATP-BINDING PROTEIN DDPD-RELATED"/>
    <property type="match status" value="1"/>
</dbReference>
<dbReference type="PANTHER" id="PTHR43297">
    <property type="entry name" value="OLIGOPEPTIDE TRANSPORT ATP-BINDING PROTEIN APPD"/>
    <property type="match status" value="1"/>
</dbReference>
<dbReference type="Pfam" id="PF00005">
    <property type="entry name" value="ABC_tran"/>
    <property type="match status" value="1"/>
</dbReference>
<dbReference type="Pfam" id="PF08352">
    <property type="entry name" value="oligo_HPY"/>
    <property type="match status" value="1"/>
</dbReference>
<dbReference type="SMART" id="SM00382">
    <property type="entry name" value="AAA"/>
    <property type="match status" value="1"/>
</dbReference>
<dbReference type="SUPFAM" id="SSF52540">
    <property type="entry name" value="P-loop containing nucleoside triphosphate hydrolases"/>
    <property type="match status" value="1"/>
</dbReference>
<dbReference type="PROSITE" id="PS00211">
    <property type="entry name" value="ABC_TRANSPORTER_1"/>
    <property type="match status" value="1"/>
</dbReference>
<dbReference type="PROSITE" id="PS50893">
    <property type="entry name" value="ABC_TRANSPORTER_2"/>
    <property type="match status" value="1"/>
</dbReference>
<accession>P77268</accession>
<proteinExistence type="evidence at transcript level"/>
<evidence type="ECO:0000255" key="1">
    <source>
        <dbReference type="PROSITE-ProRule" id="PRU00434"/>
    </source>
</evidence>
<evidence type="ECO:0000269" key="2">
    <source>
    </source>
</evidence>
<evidence type="ECO:0000303" key="3">
    <source>
    </source>
</evidence>
<evidence type="ECO:0000305" key="4"/>
<evidence type="ECO:0000305" key="5">
    <source>
    </source>
</evidence>
<keyword id="KW-0067">ATP-binding</keyword>
<keyword id="KW-0997">Cell inner membrane</keyword>
<keyword id="KW-1003">Cell membrane</keyword>
<keyword id="KW-0472">Membrane</keyword>
<keyword id="KW-0547">Nucleotide-binding</keyword>
<keyword id="KW-0571">Peptide transport</keyword>
<keyword id="KW-0653">Protein transport</keyword>
<keyword id="KW-1185">Reference proteome</keyword>
<keyword id="KW-0813">Transport</keyword>
<feature type="chain" id="PRO_0000093165" description="Probable D,D-dipeptide transport ATP-binding protein DdpD">
    <location>
        <begin position="1"/>
        <end position="328"/>
    </location>
</feature>
<feature type="domain" description="ABC transporter" evidence="1">
    <location>
        <begin position="6"/>
        <end position="257"/>
    </location>
</feature>
<feature type="binding site" evidence="1">
    <location>
        <begin position="42"/>
        <end position="49"/>
    </location>
    <ligand>
        <name>ATP</name>
        <dbReference type="ChEBI" id="CHEBI:30616"/>
    </ligand>
</feature>
<protein>
    <recommendedName>
        <fullName>Probable D,D-dipeptide transport ATP-binding protein DdpD</fullName>
    </recommendedName>
</protein>
<name>DDPD_ECOLI</name>
<reference key="1">
    <citation type="journal article" date="1996" name="DNA Res.">
        <title>A 570-kb DNA sequence of the Escherichia coli K-12 genome corresponding to the 28.0-40.1 min region on the linkage map.</title>
        <authorList>
            <person name="Aiba H."/>
            <person name="Baba T."/>
            <person name="Fujita K."/>
            <person name="Hayashi K."/>
            <person name="Inada T."/>
            <person name="Isono K."/>
            <person name="Itoh T."/>
            <person name="Kasai H."/>
            <person name="Kashimoto K."/>
            <person name="Kimura S."/>
            <person name="Kitakawa M."/>
            <person name="Kitagawa M."/>
            <person name="Makino K."/>
            <person name="Miki T."/>
            <person name="Mizobuchi K."/>
            <person name="Mori H."/>
            <person name="Mori T."/>
            <person name="Motomura K."/>
            <person name="Nakade S."/>
            <person name="Nakamura Y."/>
            <person name="Nashimoto H."/>
            <person name="Nishio Y."/>
            <person name="Oshima T."/>
            <person name="Saito N."/>
            <person name="Sampei G."/>
            <person name="Seki Y."/>
            <person name="Sivasundaram S."/>
            <person name="Tagami H."/>
            <person name="Takeda J."/>
            <person name="Takemoto K."/>
            <person name="Takeuchi Y."/>
            <person name="Wada C."/>
            <person name="Yamamoto Y."/>
            <person name="Horiuchi T."/>
        </authorList>
    </citation>
    <scope>NUCLEOTIDE SEQUENCE [LARGE SCALE GENOMIC DNA]</scope>
    <source>
        <strain>K12 / W3110 / ATCC 27325 / DSM 5911</strain>
    </source>
</reference>
<reference key="2">
    <citation type="journal article" date="1997" name="Science">
        <title>The complete genome sequence of Escherichia coli K-12.</title>
        <authorList>
            <person name="Blattner F.R."/>
            <person name="Plunkett G. III"/>
            <person name="Bloch C.A."/>
            <person name="Perna N.T."/>
            <person name="Burland V."/>
            <person name="Riley M."/>
            <person name="Collado-Vides J."/>
            <person name="Glasner J.D."/>
            <person name="Rode C.K."/>
            <person name="Mayhew G.F."/>
            <person name="Gregor J."/>
            <person name="Davis N.W."/>
            <person name="Kirkpatrick H.A."/>
            <person name="Goeden M.A."/>
            <person name="Rose D.J."/>
            <person name="Mau B."/>
            <person name="Shao Y."/>
        </authorList>
    </citation>
    <scope>NUCLEOTIDE SEQUENCE [LARGE SCALE GENOMIC DNA]</scope>
    <source>
        <strain>K12 / MG1655 / ATCC 47076</strain>
    </source>
</reference>
<reference key="3">
    <citation type="journal article" date="2006" name="Mol. Syst. Biol.">
        <title>Highly accurate genome sequences of Escherichia coli K-12 strains MG1655 and W3110.</title>
        <authorList>
            <person name="Hayashi K."/>
            <person name="Morooka N."/>
            <person name="Yamamoto Y."/>
            <person name="Fujita K."/>
            <person name="Isono K."/>
            <person name="Choi S."/>
            <person name="Ohtsubo E."/>
            <person name="Baba T."/>
            <person name="Wanner B.L."/>
            <person name="Mori H."/>
            <person name="Horiuchi T."/>
        </authorList>
    </citation>
    <scope>NUCLEOTIDE SEQUENCE [LARGE SCALE GENOMIC DNA]</scope>
    <source>
        <strain>K12 / W3110 / ATCC 27325 / DSM 5911</strain>
    </source>
</reference>
<reference key="4">
    <citation type="journal article" date="1998" name="Chem. Biol.">
        <title>Homologs of the vancomycin resistance D-Ala-D-Ala dipeptidase VanX in Streptomyces toyocaensis, Escherichia coli and Synechocystis: attributes of catalytic efficiency, stereoselectivity and regulation with implications for function.</title>
        <authorList>
            <person name="Lessard I.A.D."/>
            <person name="Pratt S.D."/>
            <person name="McCafferty D.G."/>
            <person name="Bussiere D.E."/>
            <person name="Hutchins C."/>
            <person name="Wanner B.L."/>
            <person name="Katz L."/>
            <person name="Walsh C.T."/>
        </authorList>
    </citation>
    <scope>INDUCTION</scope>
</reference>
<reference key="5">
    <citation type="journal article" date="1999" name="Proc. Natl. Acad. Sci. U.S.A.">
        <title>VanX, a bacterial D-alanyl-D-alanine dipeptidase: resistance, immunity, or survival function?</title>
        <authorList>
            <person name="Lessard I.A.D."/>
            <person name="Walsh C.T."/>
        </authorList>
    </citation>
    <scope>GENE NAME</scope>
</reference>
<comment type="function">
    <text evidence="5">Part of the ABC transporter complex DdpABCDF, which is probably involved in D,D-dipeptide transport (PubMed:9097039). Probably responsible for energy coupling to the transport system.</text>
</comment>
<comment type="subunit">
    <text evidence="4">The complex is composed of two ATP-binding proteins (DdpD and DdpF), two transmembrane proteins (DdpB and DdpC) and a solute-binding protein (DdpA).</text>
</comment>
<comment type="subcellular location">
    <subcellularLocation>
        <location evidence="4">Cell inner membrane</location>
        <topology evidence="4">Peripheral membrane protein</topology>
    </subcellularLocation>
</comment>
<comment type="induction">
    <text evidence="2">Induced by RpoS in stationary phase.</text>
</comment>
<comment type="similarity">
    <text evidence="4">Belongs to the ABC transporter superfamily.</text>
</comment>
<organism>
    <name type="scientific">Escherichia coli (strain K12)</name>
    <dbReference type="NCBI Taxonomy" id="83333"/>
    <lineage>
        <taxon>Bacteria</taxon>
        <taxon>Pseudomonadati</taxon>
        <taxon>Pseudomonadota</taxon>
        <taxon>Gammaproteobacteria</taxon>
        <taxon>Enterobacterales</taxon>
        <taxon>Enterobacteriaceae</taxon>
        <taxon>Escherichia</taxon>
    </lineage>
</organism>
<sequence length="328" mass="36100">MTQPVLDIQQLHLSFPGFNGDVHALNNVSLQINRGEIVGLVGESGSGKSVTAMLIMRLLPTGSYCVHRGQISLLGEDVLNAREKQLRQWRGARVAMIFQEPMTALNPTRRIGLQMMDVIRHHQPISRREARAKAIDLLEEMQIPDAVEVMSRYPFELSGGMRQRVMIALAFSCEPQLIIADEPTTALDVTVQLQVLRLLKHKARASGTAVLFISHDMAVVSQLCDSVYVMYAGSVIESGVTADVIHHPRHPYTIGLLQCAPEHGVPRQLLPAIPGTVPNLTHLPDGCAFRDRCYAAGAQCENVPALTACGDNNQRCACWYPQQEVISV</sequence>
<gene>
    <name evidence="3" type="primary">ddpD</name>
    <name type="synonym">yddP</name>
    <name type="ordered locus">b1484</name>
    <name type="ordered locus">JW1479</name>
</gene>